<proteinExistence type="inferred from homology"/>
<organism>
    <name type="scientific">Mycoplasma genitalium (strain ATCC 33530 / DSM 19775 / NCTC 10195 / G37)</name>
    <name type="common">Mycoplasmoides genitalium</name>
    <dbReference type="NCBI Taxonomy" id="243273"/>
    <lineage>
        <taxon>Bacteria</taxon>
        <taxon>Bacillati</taxon>
        <taxon>Mycoplasmatota</taxon>
        <taxon>Mycoplasmoidales</taxon>
        <taxon>Mycoplasmoidaceae</taxon>
        <taxon>Mycoplasmoides</taxon>
    </lineage>
</organism>
<sequence>MHAIVVCGAKQYLVHENESIFVEKLAGKVGQEIQLDKVLMLDEKIGKPYLEKAKVVCVIEKHGLKSKIKLIKHISQKHHLKRYGHRQPYTKLKVVRFIHD</sequence>
<keyword id="KW-1185">Reference proteome</keyword>
<keyword id="KW-0687">Ribonucleoprotein</keyword>
<keyword id="KW-0689">Ribosomal protein</keyword>
<keyword id="KW-0694">RNA-binding</keyword>
<keyword id="KW-0699">rRNA-binding</keyword>
<dbReference type="EMBL" id="L43967">
    <property type="protein sequence ID" value="AAC71453.1"/>
    <property type="molecule type" value="Genomic_DNA"/>
</dbReference>
<dbReference type="EMBL" id="U02141">
    <property type="protein sequence ID" value="AAD12418.1"/>
    <property type="molecule type" value="Genomic_DNA"/>
</dbReference>
<dbReference type="PIR" id="F64225">
    <property type="entry name" value="F64225"/>
</dbReference>
<dbReference type="RefSeq" id="WP_009885769.1">
    <property type="nucleotide sequence ID" value="NC_000908.2"/>
</dbReference>
<dbReference type="SMR" id="P47474"/>
<dbReference type="FunCoup" id="P47474">
    <property type="interactions" value="169"/>
</dbReference>
<dbReference type="STRING" id="243273.MG_232"/>
<dbReference type="GeneID" id="88282378"/>
<dbReference type="KEGG" id="mge:MG_232"/>
<dbReference type="eggNOG" id="COG0261">
    <property type="taxonomic scope" value="Bacteria"/>
</dbReference>
<dbReference type="HOGENOM" id="CLU_061463_3_1_14"/>
<dbReference type="InParanoid" id="P47474"/>
<dbReference type="OrthoDB" id="9813334at2"/>
<dbReference type="BioCyc" id="MGEN243273:G1GJ2-279-MONOMER"/>
<dbReference type="Proteomes" id="UP000000807">
    <property type="component" value="Chromosome"/>
</dbReference>
<dbReference type="GO" id="GO:0005737">
    <property type="term" value="C:cytoplasm"/>
    <property type="evidence" value="ECO:0007669"/>
    <property type="project" value="UniProtKB-ARBA"/>
</dbReference>
<dbReference type="GO" id="GO:1990904">
    <property type="term" value="C:ribonucleoprotein complex"/>
    <property type="evidence" value="ECO:0007669"/>
    <property type="project" value="UniProtKB-KW"/>
</dbReference>
<dbReference type="GO" id="GO:0005840">
    <property type="term" value="C:ribosome"/>
    <property type="evidence" value="ECO:0007669"/>
    <property type="project" value="UniProtKB-KW"/>
</dbReference>
<dbReference type="GO" id="GO:0019843">
    <property type="term" value="F:rRNA binding"/>
    <property type="evidence" value="ECO:0007669"/>
    <property type="project" value="UniProtKB-UniRule"/>
</dbReference>
<dbReference type="GO" id="GO:0003735">
    <property type="term" value="F:structural constituent of ribosome"/>
    <property type="evidence" value="ECO:0007669"/>
    <property type="project" value="InterPro"/>
</dbReference>
<dbReference type="GO" id="GO:0006412">
    <property type="term" value="P:translation"/>
    <property type="evidence" value="ECO:0007669"/>
    <property type="project" value="UniProtKB-UniRule"/>
</dbReference>
<dbReference type="HAMAP" id="MF_01363">
    <property type="entry name" value="Ribosomal_bL21"/>
    <property type="match status" value="1"/>
</dbReference>
<dbReference type="InterPro" id="IPR028909">
    <property type="entry name" value="bL21-like"/>
</dbReference>
<dbReference type="InterPro" id="IPR036164">
    <property type="entry name" value="bL21-like_sf"/>
</dbReference>
<dbReference type="InterPro" id="IPR001787">
    <property type="entry name" value="Ribosomal_bL21"/>
</dbReference>
<dbReference type="InterPro" id="IPR018258">
    <property type="entry name" value="Ribosomal_bL21_CS"/>
</dbReference>
<dbReference type="NCBIfam" id="TIGR00061">
    <property type="entry name" value="L21"/>
    <property type="match status" value="1"/>
</dbReference>
<dbReference type="PANTHER" id="PTHR21349">
    <property type="entry name" value="50S RIBOSOMAL PROTEIN L21"/>
    <property type="match status" value="1"/>
</dbReference>
<dbReference type="PANTHER" id="PTHR21349:SF0">
    <property type="entry name" value="LARGE RIBOSOMAL SUBUNIT PROTEIN BL21M"/>
    <property type="match status" value="1"/>
</dbReference>
<dbReference type="Pfam" id="PF00829">
    <property type="entry name" value="Ribosomal_L21p"/>
    <property type="match status" value="1"/>
</dbReference>
<dbReference type="SUPFAM" id="SSF141091">
    <property type="entry name" value="L21p-like"/>
    <property type="match status" value="1"/>
</dbReference>
<dbReference type="PROSITE" id="PS01169">
    <property type="entry name" value="RIBOSOMAL_L21"/>
    <property type="match status" value="1"/>
</dbReference>
<protein>
    <recommendedName>
        <fullName evidence="1">Large ribosomal subunit protein bL21</fullName>
    </recommendedName>
    <alternativeName>
        <fullName evidence="2">50S ribosomal protein L21</fullName>
    </alternativeName>
</protein>
<reference key="1">
    <citation type="journal article" date="1995" name="Science">
        <title>The minimal gene complement of Mycoplasma genitalium.</title>
        <authorList>
            <person name="Fraser C.M."/>
            <person name="Gocayne J.D."/>
            <person name="White O."/>
            <person name="Adams M.D."/>
            <person name="Clayton R.A."/>
            <person name="Fleischmann R.D."/>
            <person name="Bult C.J."/>
            <person name="Kerlavage A.R."/>
            <person name="Sutton G.G."/>
            <person name="Kelley J.M."/>
            <person name="Fritchman J.L."/>
            <person name="Weidman J.F."/>
            <person name="Small K.V."/>
            <person name="Sandusky M."/>
            <person name="Fuhrmann J.L."/>
            <person name="Nguyen D.T."/>
            <person name="Utterback T.R."/>
            <person name="Saudek D.M."/>
            <person name="Phillips C.A."/>
            <person name="Merrick J.M."/>
            <person name="Tomb J.-F."/>
            <person name="Dougherty B.A."/>
            <person name="Bott K.F."/>
            <person name="Hu P.-C."/>
            <person name="Lucier T.S."/>
            <person name="Peterson S.N."/>
            <person name="Smith H.O."/>
            <person name="Hutchison C.A. III"/>
            <person name="Venter J.C."/>
        </authorList>
    </citation>
    <scope>NUCLEOTIDE SEQUENCE [LARGE SCALE GENOMIC DNA]</scope>
    <source>
        <strain>ATCC 33530 / DSM 19775 / NCTC 10195 / G37</strain>
    </source>
</reference>
<reference key="2">
    <citation type="journal article" date="1993" name="J. Bacteriol.">
        <title>A survey of the Mycoplasma genitalium genome by using random sequencing.</title>
        <authorList>
            <person name="Peterson S.N."/>
            <person name="Hu P.-C."/>
            <person name="Bott K.F."/>
            <person name="Hutchison C.A. III"/>
        </authorList>
    </citation>
    <scope>NUCLEOTIDE SEQUENCE [GENOMIC DNA]</scope>
    <source>
        <strain>ATCC 33530 / DSM 19775 / NCTC 10195 / G37</strain>
    </source>
</reference>
<comment type="function">
    <text evidence="1">This protein binds to 23S rRNA in the presence of protein L20.</text>
</comment>
<comment type="subunit">
    <text evidence="1">Part of the 50S ribosomal subunit. Contacts protein L20.</text>
</comment>
<comment type="similarity">
    <text evidence="1">Belongs to the bacterial ribosomal protein bL21 family.</text>
</comment>
<gene>
    <name evidence="1" type="primary">rplU</name>
    <name evidence="1" type="synonym">rpl21</name>
    <name type="ordered locus">MG232</name>
</gene>
<feature type="chain" id="PRO_0000181006" description="Large ribosomal subunit protein bL21">
    <location>
        <begin position="1"/>
        <end position="100"/>
    </location>
</feature>
<name>RL21_MYCGE</name>
<evidence type="ECO:0000255" key="1">
    <source>
        <dbReference type="HAMAP-Rule" id="MF_01363"/>
    </source>
</evidence>
<evidence type="ECO:0000305" key="2"/>
<accession>P47474</accession>